<feature type="chain" id="PRO_0000219567" description="Gas vesicle ATPase GvpN1">
    <location>
        <begin position="1"/>
        <end position="347"/>
    </location>
</feature>
<feature type="region of interest" description="Disordered" evidence="3">
    <location>
        <begin position="1"/>
        <end position="64"/>
    </location>
</feature>
<feature type="compositionally biased region" description="Basic residues" evidence="3">
    <location>
        <begin position="1"/>
        <end position="11"/>
    </location>
</feature>
<feature type="compositionally biased region" description="Basic and acidic residues" evidence="3">
    <location>
        <begin position="18"/>
        <end position="55"/>
    </location>
</feature>
<feature type="binding site" evidence="2">
    <location>
        <begin position="91"/>
        <end position="98"/>
    </location>
    <ligand>
        <name>ATP</name>
        <dbReference type="ChEBI" id="CHEBI:30616"/>
    </ligand>
</feature>
<feature type="sequence conflict" description="In Ref. 1; CAA45982." evidence="18" ref="1">
    <original>GQESS</original>
    <variation>ARSRL</variation>
    <location>
        <begin position="46"/>
        <end position="50"/>
    </location>
</feature>
<feature type="sequence conflict" description="In Ref. 1; CAA45982." evidence="18" ref="1">
    <original>R</original>
    <variation>G</variation>
    <location>
        <position position="280"/>
    </location>
</feature>
<reference evidence="26" key="1">
    <citation type="journal article" date="1992" name="J. Mol. Biol.">
        <title>Three different but related gene clusters encoding gas vesicles in halophilic archaea.</title>
        <authorList>
            <person name="Englert C."/>
            <person name="Krueger K."/>
            <person name="Offner S."/>
            <person name="Pfeifer F."/>
        </authorList>
    </citation>
    <scope>NUCLEOTIDE SEQUENCE [GENOMIC DNA]</scope>
    <scope>GAS VESICLE GENE CLUSTER</scope>
    <source>
        <strain>NRC-817</strain>
        <plasmid>pHH1</plasmid>
    </source>
</reference>
<reference evidence="24" key="2">
    <citation type="journal article" date="1993" name="J. Bacteriol.">
        <title>The rightward gas vesicle operon in Halobacterium plasmid pNRC100: identification of the gvpA and gvpC gene products by use of antibody probes and genetic analysis of the region downstream of gvpC.</title>
        <authorList>
            <person name="Halladay J.T."/>
            <person name="Jones J.G."/>
            <person name="Lin F."/>
            <person name="Macdonald A.B."/>
            <person name="Dassarma S."/>
        </authorList>
    </citation>
    <scope>NUCLEOTIDE SEQUENCE [GENOMIC DNA]</scope>
    <scope>INDUCTION</scope>
    <source>
        <strain>ATCC 700922 / JCM 11081 / NRC-1</strain>
        <plasmid>pNRC100</plasmid>
    </source>
</reference>
<reference key="3">
    <citation type="journal article" date="1998" name="Genome Res.">
        <title>Snapshot of a large dynamic replicon in a halophilic archaeon: megaplasmid or minichromosome?</title>
        <authorList>
            <person name="Ng W.V."/>
            <person name="Ciufo S.A."/>
            <person name="Smith T.M."/>
            <person name="Bumgarner R.E."/>
            <person name="Baskin D."/>
            <person name="Faust J."/>
            <person name="Hall B."/>
            <person name="Loretz C."/>
            <person name="Seto J."/>
            <person name="Slagel J."/>
            <person name="Hood L."/>
            <person name="DasSarma S."/>
        </authorList>
    </citation>
    <scope>NUCLEOTIDE SEQUENCE [LARGE SCALE GENOMIC DNA]</scope>
    <source>
        <strain>ATCC 700922 / JCM 11081 / NRC-1</strain>
        <plasmid>pNRC100</plasmid>
    </source>
</reference>
<reference evidence="25" key="4">
    <citation type="journal article" date="2000" name="Proc. Natl. Acad. Sci. U.S.A.">
        <title>Genome sequence of Halobacterium species NRC-1.</title>
        <authorList>
            <person name="Ng W.V."/>
            <person name="Kennedy S.P."/>
            <person name="Mahairas G.G."/>
            <person name="Berquist B."/>
            <person name="Pan M."/>
            <person name="Shukla H.D."/>
            <person name="Lasky S.R."/>
            <person name="Baliga N.S."/>
            <person name="Thorsson V."/>
            <person name="Sbrogna J."/>
            <person name="Swartzell S."/>
            <person name="Weir D."/>
            <person name="Hall J."/>
            <person name="Dahl T.A."/>
            <person name="Welti R."/>
            <person name="Goo Y.A."/>
            <person name="Leithauser B."/>
            <person name="Keller K."/>
            <person name="Cruz R."/>
            <person name="Danson M.J."/>
            <person name="Hough D.W."/>
            <person name="Maddocks D.G."/>
            <person name="Jablonski P.E."/>
            <person name="Krebs M.P."/>
            <person name="Angevine C.M."/>
            <person name="Dale H."/>
            <person name="Isenbarger T.A."/>
            <person name="Peck R.F."/>
            <person name="Pohlschroder M."/>
            <person name="Spudich J.L."/>
            <person name="Jung K.-H."/>
            <person name="Alam M."/>
            <person name="Freitas T."/>
            <person name="Hou S."/>
            <person name="Daniels C.J."/>
            <person name="Dennis P.P."/>
            <person name="Omer A.D."/>
            <person name="Ebhardt H."/>
            <person name="Lowe T.M."/>
            <person name="Liang P."/>
            <person name="Riley M."/>
            <person name="Hood L."/>
            <person name="DasSarma S."/>
        </authorList>
    </citation>
    <scope>NUCLEOTIDE SEQUENCE [LARGE SCALE GENOMIC DNA]</scope>
    <source>
        <strain>ATCC 700922 / JCM 11081 / NRC-1</strain>
        <plasmid>pNRC200</plasmid>
    </source>
</reference>
<reference key="5">
    <citation type="journal article" date="1991" name="Mol. Microbiol.">
        <title>A DNA region of 9 kbp contains all genes necessary for gas vesicle synthesis in halophilic archaebacteria.</title>
        <authorList>
            <person name="Horne M."/>
            <person name="Englert C."/>
            <person name="Wimmer C."/>
            <person name="Pfeifer F."/>
        </authorList>
    </citation>
    <scope>INDUCTION</scope>
    <source>
        <strain>NRC-817</strain>
        <plasmid>pHH1</plasmid>
    </source>
</reference>
<reference key="6">
    <citation type="journal article" date="1992" name="Gene">
        <title>Genetic transformation of a halophilic archaebacterium with a gas vesicle gene cluster restores its ability to float.</title>
        <authorList>
            <person name="Halladay J.T."/>
            <person name="Ng W.L."/>
            <person name="DasSarma S."/>
        </authorList>
    </citation>
    <scope>FUNCTION</scope>
    <scope>GAS VESICLE PRODUCTION</scope>
    <source>
        <strain>ATCC 700922 / JCM 11081 / NRC-1</strain>
        <plasmid>pNRC100</plasmid>
    </source>
</reference>
<reference key="7">
    <citation type="journal article" date="1994" name="J. Bacteriol.">
        <title>Wild-type gas vesicle formation requires at least ten genes in the gvp gene cluster of Halobacterium halobium plasmid pNRC100.</title>
        <authorList>
            <person name="DasSarma S."/>
            <person name="Arora P."/>
            <person name="Lin F."/>
            <person name="Molinari E."/>
            <person name="Yin L.R."/>
        </authorList>
    </citation>
    <scope>DISRUPTION PHENOTYPE</scope>
    <source>
        <strain>ATCC 700922 / JCM 11081 / NRC-1</strain>
        <plasmid>pNRC100</plasmid>
    </source>
</reference>
<reference key="8">
    <citation type="journal article" date="1995" name="Mol. Microbiol.">
        <title>Complementation studies with the gas vesicle-encoding p-vac region of Halobacterium salinarium PHH1 reveal a regulatory role for the p-gvpDE genes.</title>
        <authorList>
            <person name="Offner S."/>
            <person name="Pfeifer F."/>
        </authorList>
    </citation>
    <scope>FUNCTION</scope>
    <scope>INDUCTION</scope>
    <source>
        <strain>PHH1</strain>
    </source>
</reference>
<reference key="9">
    <citation type="journal article" date="1996" name="J. Bacteriol.">
        <title>Functional studies of the gvpACNO operon of Halobacterium salinarium reveal that the GvpC protein shapes gas vesicles.</title>
        <authorList>
            <person name="Offner S."/>
            <person name="Wanner G."/>
            <person name="Pfeifer F."/>
        </authorList>
    </citation>
    <scope>FUNCTION</scope>
    <scope>DISRUPTION PHENOTYPE</scope>
    <source>
        <strain>PHH1</strain>
    </source>
</reference>
<reference key="10">
    <citation type="journal article" date="1997" name="Microbiology">
        <title>Growth competition between Halobacterium salinarium strain PHH1 and mutants affected in gas vesicle synthesis.</title>
        <authorList>
            <person name="Beard S.J."/>
            <person name="Hayes P.K."/>
            <person name="Walsby A.E."/>
        </authorList>
    </citation>
    <scope>FUNCTION IN BUOYANCY</scope>
    <scope>POSSIBLE INDUCTION BY OXYGEN LIMITATION</scope>
    <source>
        <strain>PHH1</strain>
    </source>
</reference>
<reference key="11">
    <citation type="journal article" date="2000" name="J. Bacteriol.">
        <title>Eight of fourteen gvp genes are sufficient for formation of gas vesicles in halophilic archaea.</title>
        <authorList>
            <person name="Offner S."/>
            <person name="Hofacker A."/>
            <person name="Wanner G."/>
            <person name="Pfeifer F."/>
        </authorList>
    </citation>
    <scope>DISRUPTION PHENOTYPE</scope>
    <source>
        <strain>PHH1</strain>
        <plasmid>pHH1</plasmid>
    </source>
</reference>
<reference key="12">
    <citation type="journal article" date="2011" name="J. Proteome Res.">
        <title>New structural proteins of Halobacterium salinarum gas vesicle revealed by comparative proteomics analysis.</title>
        <authorList>
            <person name="Chu L.J."/>
            <person name="Chen M.C."/>
            <person name="Setter J."/>
            <person name="Tsai Y.S."/>
            <person name="Yang H."/>
            <person name="Fang X."/>
            <person name="Ting Y.S."/>
            <person name="Shaffer S.A."/>
            <person name="Taylor G.K."/>
            <person name="von Haller P.D."/>
            <person name="Goodlett D.R."/>
            <person name="Ng W.V."/>
        </authorList>
    </citation>
    <scope>SUBCELLULAR LOCATION</scope>
    <scope>IDENTIFICATION BY MASS SPECTROMETRY</scope>
    <source>
        <strain>ATCC 700922 / JCM 11081 / NRC-1</strain>
    </source>
</reference>
<reference key="13">
    <citation type="journal article" date="2022" name="Front. Microbiol.">
        <title>Interaction of the gas vesicle proteins GvpA, GvpC, GvpN, and GvpO of Halobacterium salinarum.</title>
        <authorList>
            <person name="Jost A."/>
            <person name="Pfeifer F."/>
        </authorList>
    </citation>
    <scope>SUBUNIT</scope>
    <scope>SUBCELLULAR LOCATION</scope>
    <source>
        <strain>PHH1</strain>
        <plasmid>pHH1</plasmid>
    </source>
</reference>
<proteinExistence type="evidence at protein level"/>
<accession>Q9HI16</accession>
<accession>P33952</accession>
<accession>P57734</accession>
<accession>Q48312</accession>
<accession>Q6LEG5</accession>
<sequence length="347" mass="39229">MTNESRKRKVRGSQIRSSRGDKKQGRSQSRDDKEIERLERQNDARGQESSTHVDEGFVPEEQSFIETESVNRVESRMERWLDVGRPVHLIGPTGCGKTSLAMHVARERDRPVVWINGDAELTTSDLVGEYAEKERISEHDQFIHNVVKSKDIIRDRWVDNPLTLAVQEGATLVYNEFSRTKPVANNVLLSVFEEGVLELPGKRGKSRYVDVHPEFRTILTSNSVEYAGVHEPQDALLDRLIGIYMDFYDLDTEIEIVRAHVDKSADTNVEDIVRVLRELRERLDITVGTRAAIMANEGATTVDTVDQAVLTDICTDVLASKVAQRSDVRGLREEIESAIDDMEVALS</sequence>
<protein>
    <recommendedName>
        <fullName evidence="1">Gas vesicle ATPase GvpN1</fullName>
        <ecNumber evidence="1">3.6.4.-</ecNumber>
    </recommendedName>
    <alternativeName>
        <fullName evidence="16">Gas vesicle protein N1</fullName>
        <shortName evidence="16">GvpN1</shortName>
    </alternativeName>
</protein>
<geneLocation type="plasmid">
    <name>pNRC100</name>
</geneLocation>
<geneLocation type="plasmid">
    <name>pNRC200</name>
</geneLocation>
<geneLocation type="plasmid">
    <name>pHH1</name>
</geneLocation>
<name>GVPN1_HALSA</name>
<gene>
    <name type="primary">gvpN11</name>
    <name evidence="17" type="synonym">gvpN</name>
    <name evidence="15" type="synonym">p-gvpN</name>
    <name type="ordered locus">VNG_5033G</name>
</gene>
<gene>
    <name evidence="25" type="primary">gvpN1</name>
    <name evidence="25" type="ordered locus">VNG_6032G</name>
</gene>
<dbReference type="EC" id="3.6.4.-" evidence="1"/>
<dbReference type="EMBL" id="X64729">
    <property type="protein sequence ID" value="CAA45982.1"/>
    <property type="molecule type" value="Genomic_DNA"/>
</dbReference>
<dbReference type="EMBL" id="L03361">
    <property type="protein sequence ID" value="AAD15044.1"/>
    <property type="molecule type" value="Genomic_DNA"/>
</dbReference>
<dbReference type="EMBL" id="AF016485">
    <property type="protein sequence ID" value="AAC82811.1"/>
    <property type="molecule type" value="Genomic_DNA"/>
</dbReference>
<dbReference type="EMBL" id="AE004438">
    <property type="protein sequence ID" value="AAG20728.1"/>
    <property type="molecule type" value="Genomic_DNA"/>
</dbReference>
<dbReference type="PIR" id="T08244">
    <property type="entry name" value="T08244"/>
</dbReference>
<dbReference type="RefSeq" id="WP_010890517.1">
    <property type="nucleotide sequence ID" value="NC_001869.1"/>
</dbReference>
<dbReference type="SMR" id="Q9HI16"/>
<dbReference type="GeneID" id="5954617"/>
<dbReference type="KEGG" id="hal:gvpN"/>
<dbReference type="KEGG" id="hal:VNG_6032G"/>
<dbReference type="PATRIC" id="fig|64091.14.peg.2101"/>
<dbReference type="HOGENOM" id="CLU_051123_0_0_2"/>
<dbReference type="InParanoid" id="Q9HI16"/>
<dbReference type="OrthoDB" id="45425at2157"/>
<dbReference type="PhylomeDB" id="Q9HI16"/>
<dbReference type="Proteomes" id="UP000000554">
    <property type="component" value="Plasmid pNRC100"/>
</dbReference>
<dbReference type="Proteomes" id="UP000000554">
    <property type="component" value="Plasmid pNRC200"/>
</dbReference>
<dbReference type="GO" id="GO:0005737">
    <property type="term" value="C:cytoplasm"/>
    <property type="evidence" value="ECO:0007669"/>
    <property type="project" value="UniProtKB-SubCell"/>
</dbReference>
<dbReference type="GO" id="GO:0031411">
    <property type="term" value="C:gas vesicle"/>
    <property type="evidence" value="ECO:0007669"/>
    <property type="project" value="UniProtKB-SubCell"/>
</dbReference>
<dbReference type="GO" id="GO:0005524">
    <property type="term" value="F:ATP binding"/>
    <property type="evidence" value="ECO:0007669"/>
    <property type="project" value="UniProtKB-KW"/>
</dbReference>
<dbReference type="GO" id="GO:0016887">
    <property type="term" value="F:ATP hydrolysis activity"/>
    <property type="evidence" value="ECO:0007669"/>
    <property type="project" value="InterPro"/>
</dbReference>
<dbReference type="GO" id="GO:0031412">
    <property type="term" value="P:gas vesicle organization"/>
    <property type="evidence" value="ECO:0007669"/>
    <property type="project" value="InterPro"/>
</dbReference>
<dbReference type="CDD" id="cd00009">
    <property type="entry name" value="AAA"/>
    <property type="match status" value="1"/>
</dbReference>
<dbReference type="Gene3D" id="3.40.50.300">
    <property type="entry name" value="P-loop containing nucleotide triphosphate hydrolases"/>
    <property type="match status" value="1"/>
</dbReference>
<dbReference type="InterPro" id="IPR003593">
    <property type="entry name" value="AAA+_ATPase"/>
</dbReference>
<dbReference type="InterPro" id="IPR011704">
    <property type="entry name" value="ATPase_dyneun-rel_AAA"/>
</dbReference>
<dbReference type="InterPro" id="IPR050764">
    <property type="entry name" value="CbbQ/NirQ/NorQ/GpvN"/>
</dbReference>
<dbReference type="InterPro" id="IPR013462">
    <property type="entry name" value="Gas-vesicle_GvpN"/>
</dbReference>
<dbReference type="InterPro" id="IPR027417">
    <property type="entry name" value="P-loop_NTPase"/>
</dbReference>
<dbReference type="NCBIfam" id="TIGR02640">
    <property type="entry name" value="gas_vesic_GvpN"/>
    <property type="match status" value="1"/>
</dbReference>
<dbReference type="PANTHER" id="PTHR42759:SF1">
    <property type="entry name" value="MAGNESIUM-CHELATASE SUBUNIT CHLD"/>
    <property type="match status" value="1"/>
</dbReference>
<dbReference type="PANTHER" id="PTHR42759">
    <property type="entry name" value="MOXR FAMILY PROTEIN"/>
    <property type="match status" value="1"/>
</dbReference>
<dbReference type="Pfam" id="PF07728">
    <property type="entry name" value="AAA_5"/>
    <property type="match status" value="1"/>
</dbReference>
<dbReference type="SMART" id="SM00382">
    <property type="entry name" value="AAA"/>
    <property type="match status" value="1"/>
</dbReference>
<dbReference type="SUPFAM" id="SSF52540">
    <property type="entry name" value="P-loop containing nucleoside triphosphate hydrolases"/>
    <property type="match status" value="1"/>
</dbReference>
<comment type="function">
    <text evidence="1 8 9 23">An ATPase that functions in gas vesicle formation (By similarity). A minor component of the gas vesicle, also found in soluble extracts (PubMed:21158390). Probably enhances gas vesicle formation (Probable). Gas vesicles are hollow, gas filled proteinaceous nanostructures found in several microbial planktonic microorganisms. They allow positioning of halobacteria at the optimal depth for growth in the poorly aerated, shallow brine pools of their habitat (PubMed:33711860).</text>
</comment>
<comment type="function">
    <text evidence="4 5 6 11 12 13">Expression of a 9.5 kb p-vac DNA fragment containing 2 divergently transcribed regions (gvpD-gvpE-gvpF-gvpG-gvpH-gvpI-gvpJ-gvpK-gvpL-gvpM and gvpA-gvpC-gvpN-gvpO) allows H.volcanii to produce gas vesicles (PubMed:10894744, PubMed:1404376, PubMed:7651141). A similar region restores gas vesicle production in H.halobium without the p-vac locus, but which still have the c-vac locus (PubMed:1398080, PubMed:8002589, PubMed:8423144).</text>
</comment>
<comment type="catalytic activity">
    <reaction evidence="1">
        <text>ATP + H2O = ADP + phosphate + H(+)</text>
        <dbReference type="Rhea" id="RHEA:13065"/>
        <dbReference type="ChEBI" id="CHEBI:15377"/>
        <dbReference type="ChEBI" id="CHEBI:15378"/>
        <dbReference type="ChEBI" id="CHEBI:30616"/>
        <dbReference type="ChEBI" id="CHEBI:43474"/>
        <dbReference type="ChEBI" id="CHEBI:456216"/>
    </reaction>
</comment>
<comment type="subunit">
    <text evidence="10">Forms homodimers, forms a GvpN1-GvpO1 heterodimer, interacts with GvpC1 (via the latter's C-terminus) and GvpL, might interact with GvpA1.</text>
</comment>
<comment type="subcellular location">
    <subcellularLocation>
        <location evidence="8">Gas vesicle</location>
    </subcellularLocation>
    <subcellularLocation>
        <location evidence="20">Cytoplasm</location>
    </subcellularLocation>
    <text evidence="19">Probably on the exterior surface of the gas vesicle.</text>
</comment>
<comment type="induction">
    <text evidence="7 9 21 22">Maximally transcribed in late log phase, probably part of a gvpC1-gvpN1 operon (Probable) (PubMed:1956294). Gas vesicles appear earlier when grown in static culture, possibly due to O(2)-limitation (PubMed:33711860).</text>
</comment>
<comment type="disruption phenotype">
    <text evidence="4 12 14">Many small variable-shaped gas vesicles, in situ (PubMed:8002589). Makes very few gas vesicles, in H.volcanii (PubMed:10894744, PubMed:8606186).</text>
</comment>
<comment type="miscellaneous">
    <text evidence="6 7 9">Encoded in a 14-gene plasmid locus called p-vac which produces predominantly short, spindle-shaped gas vesicles during all stages of growth.</text>
</comment>
<comment type="similarity">
    <text evidence="18">Belongs to the CbbQ/NirQ/NorQ/GpvN family.</text>
</comment>
<evidence type="ECO:0000250" key="1">
    <source>
        <dbReference type="UniProtKB" id="Q8YUT0"/>
    </source>
</evidence>
<evidence type="ECO:0000255" key="2"/>
<evidence type="ECO:0000256" key="3">
    <source>
        <dbReference type="SAM" id="MobiDB-lite"/>
    </source>
</evidence>
<evidence type="ECO:0000269" key="4">
    <source>
    </source>
</evidence>
<evidence type="ECO:0000269" key="5">
    <source>
    </source>
</evidence>
<evidence type="ECO:0000269" key="6">
    <source>
    </source>
</evidence>
<evidence type="ECO:0000269" key="7">
    <source>
    </source>
</evidence>
<evidence type="ECO:0000269" key="8">
    <source>
    </source>
</evidence>
<evidence type="ECO:0000269" key="9">
    <source>
    </source>
</evidence>
<evidence type="ECO:0000269" key="10">
    <source>
    </source>
</evidence>
<evidence type="ECO:0000269" key="11">
    <source>
    </source>
</evidence>
<evidence type="ECO:0000269" key="12">
    <source>
    </source>
</evidence>
<evidence type="ECO:0000269" key="13">
    <source>
    </source>
</evidence>
<evidence type="ECO:0000269" key="14">
    <source>
    </source>
</evidence>
<evidence type="ECO:0000303" key="15">
    <source>
    </source>
</evidence>
<evidence type="ECO:0000303" key="16">
    <source>
    </source>
</evidence>
<evidence type="ECO:0000303" key="17">
    <source>
    </source>
</evidence>
<evidence type="ECO:0000305" key="18"/>
<evidence type="ECO:0000305" key="19">
    <source>
    </source>
</evidence>
<evidence type="ECO:0000305" key="20">
    <source>
    </source>
</evidence>
<evidence type="ECO:0000305" key="21">
    <source>
    </source>
</evidence>
<evidence type="ECO:0000305" key="22">
    <source>
    </source>
</evidence>
<evidence type="ECO:0000305" key="23">
    <source>
    </source>
</evidence>
<evidence type="ECO:0000312" key="24">
    <source>
        <dbReference type="EMBL" id="AAD15044.1"/>
    </source>
</evidence>
<evidence type="ECO:0000312" key="25">
    <source>
        <dbReference type="EMBL" id="AAG20728.1"/>
    </source>
</evidence>
<evidence type="ECO:0000312" key="26">
    <source>
        <dbReference type="EMBL" id="CAA45982.1"/>
    </source>
</evidence>
<organism>
    <name type="scientific">Halobacterium salinarum (strain ATCC 700922 / JCM 11081 / NRC-1)</name>
    <name type="common">Halobacterium halobium</name>
    <dbReference type="NCBI Taxonomy" id="64091"/>
    <lineage>
        <taxon>Archaea</taxon>
        <taxon>Methanobacteriati</taxon>
        <taxon>Methanobacteriota</taxon>
        <taxon>Stenosarchaea group</taxon>
        <taxon>Halobacteria</taxon>
        <taxon>Halobacteriales</taxon>
        <taxon>Halobacteriaceae</taxon>
        <taxon>Halobacterium</taxon>
        <taxon>Halobacterium salinarum NRC-34001</taxon>
    </lineage>
</organism>
<keyword id="KW-0067">ATP-binding</keyword>
<keyword id="KW-0963">Cytoplasm</keyword>
<keyword id="KW-0304">Gas vesicle</keyword>
<keyword id="KW-0378">Hydrolase</keyword>
<keyword id="KW-0547">Nucleotide-binding</keyword>
<keyword id="KW-0614">Plasmid</keyword>
<keyword id="KW-1185">Reference proteome</keyword>